<name>TI11B_ORYSJ</name>
<sequence>MAMEGKSRRFAVACGVLSQYVRAEQKMAAAAGAAPARAVTTLSLMPGAEVVVEEEERREVGEEEAGPATAPAAPLTIFYGGRMVVFEDFPADKAAEVMRMASSGMAAAPAQREGAALADMPIMRKASLQRFFAKRKDRLAATTPYARPSPAETKASEPEEKKTPTSWLDLAASASAAARRDSLTIAL</sequence>
<organism>
    <name type="scientific">Oryza sativa subsp. japonica</name>
    <name type="common">Rice</name>
    <dbReference type="NCBI Taxonomy" id="39947"/>
    <lineage>
        <taxon>Eukaryota</taxon>
        <taxon>Viridiplantae</taxon>
        <taxon>Streptophyta</taxon>
        <taxon>Embryophyta</taxon>
        <taxon>Tracheophyta</taxon>
        <taxon>Spermatophyta</taxon>
        <taxon>Magnoliopsida</taxon>
        <taxon>Liliopsida</taxon>
        <taxon>Poales</taxon>
        <taxon>Poaceae</taxon>
        <taxon>BOP clade</taxon>
        <taxon>Oryzoideae</taxon>
        <taxon>Oryzeae</taxon>
        <taxon>Oryzinae</taxon>
        <taxon>Oryza</taxon>
        <taxon>Oryza sativa</taxon>
    </lineage>
</organism>
<protein>
    <recommendedName>
        <fullName evidence="10">Protein TIFY 11b</fullName>
        <shortName evidence="8">OsTIFY11b</shortName>
    </recommendedName>
    <alternativeName>
        <fullName evidence="10">Jasmonate ZIM domain-containing protein 10</fullName>
        <shortName evidence="8">OsJAZ10</shortName>
    </alternativeName>
    <alternativeName>
        <fullName evidence="9">OsJAZ4</fullName>
    </alternativeName>
</protein>
<evidence type="ECO:0000250" key="1">
    <source>
        <dbReference type="UniProtKB" id="Q7XPM8"/>
    </source>
</evidence>
<evidence type="ECO:0000255" key="2"/>
<evidence type="ECO:0000255" key="3">
    <source>
        <dbReference type="PROSITE-ProRule" id="PRU00650"/>
    </source>
</evidence>
<evidence type="ECO:0000255" key="4">
    <source>
        <dbReference type="PROSITE-ProRule" id="PRU00768"/>
    </source>
</evidence>
<evidence type="ECO:0000256" key="5">
    <source>
        <dbReference type="SAM" id="MobiDB-lite"/>
    </source>
</evidence>
<evidence type="ECO:0000269" key="6">
    <source>
    </source>
</evidence>
<evidence type="ECO:0000269" key="7">
    <source>
    </source>
</evidence>
<evidence type="ECO:0000303" key="8">
    <source>
    </source>
</evidence>
<evidence type="ECO:0000303" key="9">
    <source>
    </source>
</evidence>
<evidence type="ECO:0000305" key="10"/>
<evidence type="ECO:0000312" key="11">
    <source>
        <dbReference type="EMBL" id="AAN65440.1"/>
    </source>
</evidence>
<evidence type="ECO:0000312" key="12">
    <source>
        <dbReference type="EMBL" id="AAO13484.1"/>
    </source>
</evidence>
<evidence type="ECO:0000312" key="13">
    <source>
        <dbReference type="EMBL" id="ABF94311.1"/>
    </source>
</evidence>
<evidence type="ECO:0000312" key="14">
    <source>
        <dbReference type="EMBL" id="BAF11082.1"/>
    </source>
</evidence>
<accession>Q10QW3</accession>
<accession>A0A0P0VTU9</accession>
<accession>Q8GSA8</accession>
<proteinExistence type="evidence at protein level"/>
<reference key="1">
    <citation type="journal article" date="2005" name="Genome Res.">
        <title>Sequence, annotation, and analysis of synteny between rice chromosome 3 and diverged grass species.</title>
        <authorList>
            <consortium name="The rice chromosome 3 sequencing consortium"/>
            <person name="Buell C.R."/>
            <person name="Yuan Q."/>
            <person name="Ouyang S."/>
            <person name="Liu J."/>
            <person name="Zhu W."/>
            <person name="Wang A."/>
            <person name="Maiti R."/>
            <person name="Haas B."/>
            <person name="Wortman J."/>
            <person name="Pertea M."/>
            <person name="Jones K.M."/>
            <person name="Kim M."/>
            <person name="Overton L."/>
            <person name="Tsitrin T."/>
            <person name="Fadrosh D."/>
            <person name="Bera J."/>
            <person name="Weaver B."/>
            <person name="Jin S."/>
            <person name="Johri S."/>
            <person name="Reardon M."/>
            <person name="Webb K."/>
            <person name="Hill J."/>
            <person name="Moffat K."/>
            <person name="Tallon L."/>
            <person name="Van Aken S."/>
            <person name="Lewis M."/>
            <person name="Utterback T."/>
            <person name="Feldblyum T."/>
            <person name="Zismann V."/>
            <person name="Iobst S."/>
            <person name="Hsiao J."/>
            <person name="de Vazeille A.R."/>
            <person name="Salzberg S.L."/>
            <person name="White O."/>
            <person name="Fraser C.M."/>
            <person name="Yu Y."/>
            <person name="Kim H."/>
            <person name="Rambo T."/>
            <person name="Currie J."/>
            <person name="Collura K."/>
            <person name="Kernodle-Thompson S."/>
            <person name="Wei F."/>
            <person name="Kudrna K."/>
            <person name="Ammiraju J.S.S."/>
            <person name="Luo M."/>
            <person name="Goicoechea J.L."/>
            <person name="Wing R.A."/>
            <person name="Henry D."/>
            <person name="Oates R."/>
            <person name="Palmer M."/>
            <person name="Pries G."/>
            <person name="Saski C."/>
            <person name="Simmons J."/>
            <person name="Soderlund C."/>
            <person name="Nelson W."/>
            <person name="de la Bastide M."/>
            <person name="Spiegel L."/>
            <person name="Nascimento L."/>
            <person name="Huang E."/>
            <person name="Preston R."/>
            <person name="Zutavern T."/>
            <person name="Palmer L."/>
            <person name="O'Shaughnessy A."/>
            <person name="Dike S."/>
            <person name="McCombie W.R."/>
            <person name="Minx P."/>
            <person name="Cordum H."/>
            <person name="Wilson R."/>
            <person name="Jin W."/>
            <person name="Lee H.R."/>
            <person name="Jiang J."/>
            <person name="Jackson S."/>
        </authorList>
    </citation>
    <scope>NUCLEOTIDE SEQUENCE [LARGE SCALE GENOMIC DNA]</scope>
    <source>
        <strain>cv. Nipponbare</strain>
    </source>
</reference>
<reference key="2">
    <citation type="journal article" date="2005" name="Nature">
        <title>The map-based sequence of the rice genome.</title>
        <authorList>
            <consortium name="International rice genome sequencing project (IRGSP)"/>
        </authorList>
    </citation>
    <scope>NUCLEOTIDE SEQUENCE [LARGE SCALE GENOMIC DNA]</scope>
    <source>
        <strain>cv. Nipponbare</strain>
    </source>
</reference>
<reference key="3">
    <citation type="journal article" date="2008" name="Nucleic Acids Res.">
        <title>The rice annotation project database (RAP-DB): 2008 update.</title>
        <authorList>
            <consortium name="The rice annotation project (RAP)"/>
        </authorList>
    </citation>
    <scope>GENOME REANNOTATION</scope>
    <source>
        <strain>cv. Nipponbare</strain>
    </source>
</reference>
<reference key="4">
    <citation type="journal article" date="2013" name="Rice">
        <title>Improvement of the Oryza sativa Nipponbare reference genome using next generation sequence and optical map data.</title>
        <authorList>
            <person name="Kawahara Y."/>
            <person name="de la Bastide M."/>
            <person name="Hamilton J.P."/>
            <person name="Kanamori H."/>
            <person name="McCombie W.R."/>
            <person name="Ouyang S."/>
            <person name="Schwartz D.C."/>
            <person name="Tanaka T."/>
            <person name="Wu J."/>
            <person name="Zhou S."/>
            <person name="Childs K.L."/>
            <person name="Davidson R.M."/>
            <person name="Lin H."/>
            <person name="Quesada-Ocampo L."/>
            <person name="Vaillancourt B."/>
            <person name="Sakai H."/>
            <person name="Lee S.S."/>
            <person name="Kim J."/>
            <person name="Numa H."/>
            <person name="Itoh T."/>
            <person name="Buell C.R."/>
            <person name="Matsumoto T."/>
        </authorList>
    </citation>
    <scope>GENOME REANNOTATION</scope>
    <source>
        <strain>cv. Nipponbare</strain>
    </source>
</reference>
<reference key="5">
    <citation type="journal article" date="2003" name="Science">
        <title>Collection, mapping, and annotation of over 28,000 cDNA clones from japonica rice.</title>
        <authorList>
            <consortium name="The rice full-length cDNA consortium"/>
        </authorList>
    </citation>
    <scope>NUCLEOTIDE SEQUENCE [LARGE SCALE MRNA]</scope>
    <source>
        <strain>cv. Nipponbare</strain>
    </source>
</reference>
<reference key="6">
    <citation type="journal article" date="2009" name="Plant Mol. Biol.">
        <title>Identification and expression profiling analysis of TIFY family genes involved in stress and phytohormone responses in rice.</title>
        <authorList>
            <person name="Ye H."/>
            <person name="Du H."/>
            <person name="Tang N."/>
            <person name="Li X."/>
            <person name="Xiong L."/>
        </authorList>
    </citation>
    <scope>GENE FAMILY</scope>
    <scope>NOMENCLATURE</scope>
    <scope>INDUCTION</scope>
</reference>
<reference key="7">
    <citation type="journal article" date="2013" name="PLoS ONE">
        <title>Oryza sativa COI homologues restore jasmonate signal transduction in Arabidopsis coi1-1 mutants.</title>
        <authorList>
            <person name="Lee H.Y."/>
            <person name="Seo J.S."/>
            <person name="Cho J.H."/>
            <person name="Jung H."/>
            <person name="Kim J.K."/>
            <person name="Lee J.S."/>
            <person name="Rhee S."/>
            <person name="Do Choi Y."/>
        </authorList>
    </citation>
    <scope>INTERACTION WITH COI1B</scope>
</reference>
<gene>
    <name evidence="8" type="primary">TIFY11B</name>
    <name evidence="8" type="synonym">JAZ10</name>
    <name evidence="14" type="ordered locus">Os03g0181100</name>
    <name evidence="13" type="ordered locus">LOC_Os03g08330</name>
    <name evidence="12" type="ORF">OSJNBa0050H14.24</name>
    <name evidence="11" type="ORF">OSJNBb0076N15.10</name>
</gene>
<feature type="chain" id="PRO_0000434855" description="Protein TIFY 11b">
    <location>
        <begin position="1"/>
        <end position="187"/>
    </location>
</feature>
<feature type="domain" description="Tify" evidence="3">
    <location>
        <begin position="68"/>
        <end position="103"/>
    </location>
</feature>
<feature type="region of interest" description="Disordered" evidence="5">
    <location>
        <begin position="139"/>
        <end position="168"/>
    </location>
</feature>
<feature type="short sequence motif" description="Jas" evidence="2">
    <location>
        <begin position="121"/>
        <end position="145"/>
    </location>
</feature>
<feature type="short sequence motif" description="Nuclear localization signal" evidence="4">
    <location>
        <begin position="123"/>
        <end position="130"/>
    </location>
</feature>
<feature type="compositionally biased region" description="Basic and acidic residues" evidence="5">
    <location>
        <begin position="154"/>
        <end position="163"/>
    </location>
</feature>
<dbReference type="EMBL" id="AC125472">
    <property type="protein sequence ID" value="AAO13484.1"/>
    <property type="status" value="ALT_INIT"/>
    <property type="molecule type" value="Genomic_DNA"/>
</dbReference>
<dbReference type="EMBL" id="AC126223">
    <property type="protein sequence ID" value="AAN65440.1"/>
    <property type="status" value="ALT_INIT"/>
    <property type="molecule type" value="Genomic_DNA"/>
</dbReference>
<dbReference type="EMBL" id="DP000009">
    <property type="protein sequence ID" value="ABF94311.1"/>
    <property type="molecule type" value="Genomic_DNA"/>
</dbReference>
<dbReference type="EMBL" id="AP008209">
    <property type="protein sequence ID" value="BAF11082.1"/>
    <property type="molecule type" value="Genomic_DNA"/>
</dbReference>
<dbReference type="EMBL" id="AP014959">
    <property type="protein sequence ID" value="BAS82624.1"/>
    <property type="molecule type" value="Genomic_DNA"/>
</dbReference>
<dbReference type="EMBL" id="AK067971">
    <property type="protein sequence ID" value="BAG90690.1"/>
    <property type="molecule type" value="mRNA"/>
</dbReference>
<dbReference type="RefSeq" id="XP_015633147.1">
    <property type="nucleotide sequence ID" value="XM_015777661.1"/>
</dbReference>
<dbReference type="SMR" id="Q10QW3"/>
<dbReference type="FunCoup" id="Q10QW3">
    <property type="interactions" value="4"/>
</dbReference>
<dbReference type="STRING" id="39947.Q10QW3"/>
<dbReference type="PaxDb" id="39947-Q10QW3"/>
<dbReference type="EnsemblPlants" id="Os03t0181100-01">
    <property type="protein sequence ID" value="Os03t0181100-01"/>
    <property type="gene ID" value="Os03g0181100"/>
</dbReference>
<dbReference type="EnsemblPlants" id="Os03t0181100-02">
    <property type="protein sequence ID" value="Os03t0181100-02"/>
    <property type="gene ID" value="Os03g0181100"/>
</dbReference>
<dbReference type="Gramene" id="Os03t0181100-01">
    <property type="protein sequence ID" value="Os03t0181100-01"/>
    <property type="gene ID" value="Os03g0181100"/>
</dbReference>
<dbReference type="Gramene" id="Os03t0181100-02">
    <property type="protein sequence ID" value="Os03t0181100-02"/>
    <property type="gene ID" value="Os03g0181100"/>
</dbReference>
<dbReference type="KEGG" id="dosa:Os03g0181100"/>
<dbReference type="eggNOG" id="ENOG502RIU4">
    <property type="taxonomic scope" value="Eukaryota"/>
</dbReference>
<dbReference type="HOGENOM" id="CLU_051749_3_1_1"/>
<dbReference type="InParanoid" id="Q10QW3"/>
<dbReference type="OrthoDB" id="1937734at2759"/>
<dbReference type="Proteomes" id="UP000000763">
    <property type="component" value="Chromosome 3"/>
</dbReference>
<dbReference type="Proteomes" id="UP000059680">
    <property type="component" value="Chromosome 3"/>
</dbReference>
<dbReference type="GO" id="GO:0005634">
    <property type="term" value="C:nucleus"/>
    <property type="evidence" value="ECO:0000318"/>
    <property type="project" value="GO_Central"/>
</dbReference>
<dbReference type="GO" id="GO:0031347">
    <property type="term" value="P:regulation of defense response"/>
    <property type="evidence" value="ECO:0000318"/>
    <property type="project" value="GO_Central"/>
</dbReference>
<dbReference type="GO" id="GO:2000022">
    <property type="term" value="P:regulation of jasmonic acid mediated signaling pathway"/>
    <property type="evidence" value="ECO:0000318"/>
    <property type="project" value="GO_Central"/>
</dbReference>
<dbReference type="GO" id="GO:0009611">
    <property type="term" value="P:response to wounding"/>
    <property type="evidence" value="ECO:0000318"/>
    <property type="project" value="GO_Central"/>
</dbReference>
<dbReference type="InterPro" id="IPR018467">
    <property type="entry name" value="CCT_CS"/>
</dbReference>
<dbReference type="InterPro" id="IPR040390">
    <property type="entry name" value="TIFY/JAZ"/>
</dbReference>
<dbReference type="InterPro" id="IPR010399">
    <property type="entry name" value="Tify_dom"/>
</dbReference>
<dbReference type="PANTHER" id="PTHR33077:SF43">
    <property type="entry name" value="PROTEIN TIFY 11B"/>
    <property type="match status" value="1"/>
</dbReference>
<dbReference type="PANTHER" id="PTHR33077">
    <property type="entry name" value="PROTEIN TIFY 4A-RELATED-RELATED"/>
    <property type="match status" value="1"/>
</dbReference>
<dbReference type="Pfam" id="PF09425">
    <property type="entry name" value="Jas_motif"/>
    <property type="match status" value="1"/>
</dbReference>
<dbReference type="Pfam" id="PF06200">
    <property type="entry name" value="tify"/>
    <property type="match status" value="1"/>
</dbReference>
<dbReference type="SMART" id="SM00979">
    <property type="entry name" value="TIFY"/>
    <property type="match status" value="1"/>
</dbReference>
<dbReference type="PROSITE" id="PS51320">
    <property type="entry name" value="TIFY"/>
    <property type="match status" value="1"/>
</dbReference>
<comment type="function">
    <text evidence="1">Repressor of jasmonate responses.</text>
</comment>
<comment type="subunit">
    <text evidence="7">Interacts with COI1B in a coronatine-dependent manner. Coronatine is an analog of jasmonoyl isoleucine (JA-Ile).</text>
</comment>
<comment type="subcellular location">
    <subcellularLocation>
        <location evidence="4">Nucleus</location>
    </subcellularLocation>
</comment>
<comment type="induction">
    <text evidence="6">By jasmonate, wounding, and cold, drought and salt stresses. Down-regulated by abscisic acid (ABA).</text>
</comment>
<comment type="domain">
    <text evidence="1">The jas domain (121-145) is required for interaction with COI1.</text>
</comment>
<comment type="PTM">
    <text evidence="1">Ubiquitinated. Targeted for degradation by the SCF(COI1) E3 ubiquitin ligase-proteasome pathway during jasmonate signaling.</text>
</comment>
<comment type="similarity">
    <text evidence="10">Belongs to the TIFY/JAZ family.</text>
</comment>
<comment type="sequence caution" evidence="10">
    <conflict type="erroneous initiation">
        <sequence resource="EMBL-CDS" id="AAN65440"/>
    </conflict>
    <text>Truncated N-terminus.</text>
</comment>
<comment type="sequence caution" evidence="10">
    <conflict type="erroneous initiation">
        <sequence resource="EMBL-CDS" id="AAO13484"/>
    </conflict>
    <text>Truncated N-terminus.</text>
</comment>
<keyword id="KW-1184">Jasmonic acid signaling pathway</keyword>
<keyword id="KW-0539">Nucleus</keyword>
<keyword id="KW-1185">Reference proteome</keyword>
<keyword id="KW-0804">Transcription</keyword>
<keyword id="KW-0805">Transcription regulation</keyword>
<keyword id="KW-0832">Ubl conjugation</keyword>